<gene>
    <name type="primary">Spata18</name>
    <name type="synonym">Mieap</name>
</gene>
<organism>
    <name type="scientific">Mus musculus</name>
    <name type="common">Mouse</name>
    <dbReference type="NCBI Taxonomy" id="10090"/>
    <lineage>
        <taxon>Eukaryota</taxon>
        <taxon>Metazoa</taxon>
        <taxon>Chordata</taxon>
        <taxon>Craniata</taxon>
        <taxon>Vertebrata</taxon>
        <taxon>Euteleostomi</taxon>
        <taxon>Mammalia</taxon>
        <taxon>Eutheria</taxon>
        <taxon>Euarchontoglires</taxon>
        <taxon>Glires</taxon>
        <taxon>Rodentia</taxon>
        <taxon>Myomorpha</taxon>
        <taxon>Muroidea</taxon>
        <taxon>Muridae</taxon>
        <taxon>Murinae</taxon>
        <taxon>Mus</taxon>
        <taxon>Mus</taxon>
    </lineage>
</organism>
<name>MIEAP_MOUSE</name>
<protein>
    <recommendedName>
        <fullName>Mitochondria-eating protein</fullName>
    </recommendedName>
    <alternativeName>
        <fullName>Spermatogenesis-associated protein 18</fullName>
    </alternativeName>
</protein>
<proteinExistence type="evidence at protein level"/>
<evidence type="ECO:0000250" key="1">
    <source>
        <dbReference type="UniProtKB" id="Q6AYL6"/>
    </source>
</evidence>
<evidence type="ECO:0000250" key="2">
    <source>
        <dbReference type="UniProtKB" id="Q8TC71"/>
    </source>
</evidence>
<evidence type="ECO:0000255" key="3"/>
<evidence type="ECO:0000256" key="4">
    <source>
        <dbReference type="SAM" id="MobiDB-lite"/>
    </source>
</evidence>
<evidence type="ECO:0000269" key="5">
    <source>
    </source>
</evidence>
<evidence type="ECO:0000303" key="6">
    <source>
    </source>
</evidence>
<evidence type="ECO:0000305" key="7"/>
<evidence type="ECO:0007744" key="8">
    <source>
    </source>
</evidence>
<feature type="chain" id="PRO_0000408329" description="Mitochondria-eating protein">
    <location>
        <begin position="1"/>
        <end position="537"/>
    </location>
</feature>
<feature type="region of interest" description="Interaction with YWHAG/14-3-3 protein gamma" evidence="2">
    <location>
        <begin position="1"/>
        <end position="270"/>
    </location>
</feature>
<feature type="region of interest" description="Disordered" evidence="4">
    <location>
        <begin position="109"/>
        <end position="150"/>
    </location>
</feature>
<feature type="region of interest" description="Disordered" evidence="4">
    <location>
        <begin position="171"/>
        <end position="212"/>
    </location>
</feature>
<feature type="region of interest" description="Disordered" evidence="4">
    <location>
        <begin position="233"/>
        <end position="291"/>
    </location>
</feature>
<feature type="coiled-coil region" evidence="3">
    <location>
        <begin position="152"/>
        <end position="184"/>
    </location>
</feature>
<feature type="coiled-coil region" evidence="3">
    <location>
        <begin position="210"/>
        <end position="243"/>
    </location>
</feature>
<feature type="compositionally biased region" description="Basic and acidic residues" evidence="4">
    <location>
        <begin position="110"/>
        <end position="124"/>
    </location>
</feature>
<feature type="compositionally biased region" description="Polar residues" evidence="4">
    <location>
        <begin position="125"/>
        <end position="137"/>
    </location>
</feature>
<feature type="compositionally biased region" description="Basic and acidic residues" evidence="4">
    <location>
        <begin position="179"/>
        <end position="209"/>
    </location>
</feature>
<feature type="compositionally biased region" description="Low complexity" evidence="4">
    <location>
        <begin position="239"/>
        <end position="251"/>
    </location>
</feature>
<feature type="compositionally biased region" description="Basic residues" evidence="4">
    <location>
        <begin position="252"/>
        <end position="269"/>
    </location>
</feature>
<feature type="modified residue" description="Phosphoserine" evidence="1">
    <location>
        <position position="13"/>
    </location>
</feature>
<feature type="modified residue" description="Phosphoserine" evidence="1">
    <location>
        <position position="85"/>
    </location>
</feature>
<feature type="modified residue" description="Phosphoserine" evidence="8">
    <location>
        <position position="123"/>
    </location>
</feature>
<feature type="modified residue" description="Phosphoserine" evidence="8">
    <location>
        <position position="127"/>
    </location>
</feature>
<feature type="modified residue" description="Phosphoserine" evidence="1">
    <location>
        <position position="154"/>
    </location>
</feature>
<feature type="modified residue" description="Phosphoserine" evidence="1">
    <location>
        <position position="157"/>
    </location>
</feature>
<feature type="modified residue" description="Phosphoserine" evidence="1">
    <location>
        <position position="283"/>
    </location>
</feature>
<feature type="modified residue" description="Phosphoserine" evidence="1">
    <location>
        <position position="285"/>
    </location>
</feature>
<feature type="modified residue" description="Phosphoserine" evidence="1">
    <location>
        <position position="508"/>
    </location>
</feature>
<feature type="splice variant" id="VSP_041057" description="In isoform 2." evidence="7">
    <original>DLAESGKSLEGAKNGSTISLLAAEEEINQLKKQ</original>
    <variation>E</variation>
    <location>
        <begin position="139"/>
        <end position="171"/>
    </location>
</feature>
<feature type="splice variant" id="VSP_041058" description="In isoform 3." evidence="6">
    <original>T</original>
    <variation>TVHSCVAIPAENL</variation>
    <location>
        <position position="520"/>
    </location>
</feature>
<feature type="sequence conflict" description="In Ref. 2; AAI44724." evidence="7" ref="2">
    <original>V</original>
    <variation>I</variation>
    <location>
        <position position="400"/>
    </location>
</feature>
<keyword id="KW-0025">Alternative splicing</keyword>
<keyword id="KW-0175">Coiled coil</keyword>
<keyword id="KW-0963">Cytoplasm</keyword>
<keyword id="KW-0217">Developmental protein</keyword>
<keyword id="KW-0446">Lipid-binding</keyword>
<keyword id="KW-0472">Membrane</keyword>
<keyword id="KW-0496">Mitochondrion</keyword>
<keyword id="KW-1000">Mitochondrion outer membrane</keyword>
<keyword id="KW-0597">Phosphoprotein</keyword>
<keyword id="KW-1185">Reference proteome</keyword>
<comment type="function">
    <text evidence="2">Key regulator of mitochondrial quality that mediates the repairing or degradation of unhealthy mitochondria in response to mitochondrial damage. Mediator of mitochondrial protein catabolic process (also named MALM) by mediating the degradation of damaged proteins inside mitochondria by promoting the accumulation in the mitochondrial matrix of hydrolases that are characteristic of the lysosomal lumen. Also involved in mitochondrion degradation of damaged mitochondria by promoting the formation of vacuole-like structures (named MIV), which engulf and degrade unhealthy mitochondria by accumulating lysosomes. The physical interaction of SPATA18/MIEAP, BNIP3 and BNIP3L/NIX at the mitochondrial outer membrane regulates the opening of a pore in the mitochondrial double membrane in order to mediate the translocation of lysosomal proteins from the cytoplasm to the mitochondrial matrix. Binds cardiolipin. May form molecular condensates (non-membrane-bounded organelles) within mitochondria that compartmentalize and promote cardiolipin metabolism.</text>
</comment>
<comment type="subunit">
    <text evidence="2">Interacts (via coiled-coil domains) with BNIP3L (via BH3 domain). Interacts (via coiled-coil domains) with BNIP3 (via BH3 domain). Interacts with YWHAG/14-3-3 protein gamma; a protein that also plays a role in MALM.</text>
</comment>
<comment type="subcellular location">
    <subcellularLocation>
        <location evidence="2">Cytoplasm</location>
        <location evidence="2">Cytosol</location>
    </subcellularLocation>
    <subcellularLocation>
        <location evidence="2">Mitochondrion outer membrane</location>
    </subcellularLocation>
    <subcellularLocation>
        <location evidence="2">Mitochondrion matrix</location>
    </subcellularLocation>
    <text evidence="2">Localizes to the cytosol under normal conditions. Relocalizes to mitochondrion outer membrane following cellular stress. May form molecular condensates in the mitochondrial matrix. Colocalizes with BNIP3 and BNIP3L at the mitochondrion outer membrane.</text>
</comment>
<comment type="alternative products">
    <event type="alternative splicing"/>
    <isoform>
        <id>Q0P557-1</id>
        <name>1</name>
        <name>Alpha</name>
        <name>Mieap-alpha</name>
        <sequence type="displayed"/>
    </isoform>
    <isoform>
        <id>Q0P557-2</id>
        <name>2</name>
        <name>Beta</name>
        <name>Mieap-beta</name>
        <sequence type="described" ref="VSP_041057"/>
    </isoform>
    <isoform>
        <id>Q0P557-3</id>
        <name>3</name>
        <sequence type="described" ref="VSP_041058"/>
    </isoform>
</comment>
<comment type="tissue specificity">
    <text evidence="5">In testis, expressed primarily in spermatids.</text>
</comment>
<comment type="induction">
    <text evidence="5">By p53/TP53 and p63/TP63. Directly activated by p53/TP53.</text>
</comment>
<comment type="similarity">
    <text evidence="7">Belongs to the MIEAP family.</text>
</comment>
<sequence>MAESLKKLAKSESLQALQDKVTYWVNDYNSNSCDQNLNYCIELIEQVAKVQAQLFGILTVTAQEGGNNEGVETIKCRLLPLLQTSFSSVNMGKTAESEMCATQDFQLRSKNRDNSPDQDQHQSDNESFSETQPTQVQDDLAESGKSLEGAKNGSTISLLAAEEEINQLKKQLKSLQAQEDARHKTSENRRSEALKSDHRSTKRTQDQRPQDVVSNYEKHLQNLKEEIAVLSAEKSGLQGRSARSPSPSTGTRSHRRGRSRSHSRSRSHSRSNSPCTTVAKIRSPSPNRAKMSSVARKAALLSRFSDAYSQARLDAQCLLRRCIDRAETVQRIIYIATVEAFHVAKMAFRHFKIRVRKMLTPSNVGSNTDFETAVSEYIVCHLDLYDSQSSVNDVIRAMNVNPKISFPPEVDFCLLTDFIQEICCIAFAMQSLEPPLDIAFGADGEIFNDCKYRRSYDSDFTAPLVFYHVWPALMENDCVIMKGEAVTKRGAFWSSVRPVMRCRSRSLSPICPRNHFGISTVSRSRSPSPIRCTFARY</sequence>
<reference key="1">
    <citation type="journal article" date="2009" name="PLoS Biol.">
        <title>Lineage-specific biology revealed by a finished genome assembly of the mouse.</title>
        <authorList>
            <person name="Church D.M."/>
            <person name="Goodstadt L."/>
            <person name="Hillier L.W."/>
            <person name="Zody M.C."/>
            <person name="Goldstein S."/>
            <person name="She X."/>
            <person name="Bult C.J."/>
            <person name="Agarwala R."/>
            <person name="Cherry J.L."/>
            <person name="DiCuccio M."/>
            <person name="Hlavina W."/>
            <person name="Kapustin Y."/>
            <person name="Meric P."/>
            <person name="Maglott D."/>
            <person name="Birtle Z."/>
            <person name="Marques A.C."/>
            <person name="Graves T."/>
            <person name="Zhou S."/>
            <person name="Teague B."/>
            <person name="Potamousis K."/>
            <person name="Churas C."/>
            <person name="Place M."/>
            <person name="Herschleb J."/>
            <person name="Runnheim R."/>
            <person name="Forrest D."/>
            <person name="Amos-Landgraf J."/>
            <person name="Schwartz D.C."/>
            <person name="Cheng Z."/>
            <person name="Lindblad-Toh K."/>
            <person name="Eichler E.E."/>
            <person name="Ponting C.P."/>
        </authorList>
    </citation>
    <scope>NUCLEOTIDE SEQUENCE [LARGE SCALE GENOMIC DNA]</scope>
    <source>
        <strain>C57BL/6J</strain>
    </source>
</reference>
<reference key="2">
    <citation type="journal article" date="2004" name="Genome Res.">
        <title>The status, quality, and expansion of the NIH full-length cDNA project: the Mammalian Gene Collection (MGC).</title>
        <authorList>
            <consortium name="The MGC Project Team"/>
        </authorList>
    </citation>
    <scope>NUCLEOTIDE SEQUENCE [LARGE SCALE MRNA] OF 115-537 (ISOFORM 1)</scope>
    <scope>NUCLEOTIDE SEQUENCE [LARGE SCALE MRNA] OF 115-537 (ISOFORM 3)</scope>
    <source>
        <tissue>Brain</tissue>
    </source>
</reference>
<reference key="3">
    <citation type="journal article" date="2010" name="Cell">
        <title>A tissue-specific atlas of mouse protein phosphorylation and expression.</title>
        <authorList>
            <person name="Huttlin E.L."/>
            <person name="Jedrychowski M.P."/>
            <person name="Elias J.E."/>
            <person name="Goswami T."/>
            <person name="Rad R."/>
            <person name="Beausoleil S.A."/>
            <person name="Villen J."/>
            <person name="Haas W."/>
            <person name="Sowa M.E."/>
            <person name="Gygi S.P."/>
        </authorList>
    </citation>
    <scope>PHOSPHORYLATION [LARGE SCALE ANALYSIS] AT SER-123 AND SER-127</scope>
    <scope>IDENTIFICATION BY MASS SPECTROMETRY [LARGE SCALE ANALYSIS]</scope>
    <source>
        <tissue>Lung</tissue>
    </source>
</reference>
<reference key="4">
    <citation type="journal article" date="2011" name="Mol. Cell. Biol.">
        <title>SPATA18, a spermatogenesis-associated gene, is a novel transcriptional target of p53 and p63.</title>
        <authorList>
            <person name="Bornstein C."/>
            <person name="Brosh R."/>
            <person name="Molchadsky A."/>
            <person name="Madar S."/>
            <person name="Kogan-Sakin I."/>
            <person name="Goldstein I."/>
            <person name="Chakravarti D."/>
            <person name="Flores E.R."/>
            <person name="Goldfinger N."/>
            <person name="Sarig R."/>
            <person name="Rotter V."/>
        </authorList>
    </citation>
    <scope>INDUCTION</scope>
    <scope>TISSUE SPECIFICITY</scope>
</reference>
<accession>Q0P557</accession>
<accession>B7ZMP4</accession>
<dbReference type="EMBL" id="AC140429">
    <property type="status" value="NOT_ANNOTATED_CDS"/>
    <property type="molecule type" value="Genomic_DNA"/>
</dbReference>
<dbReference type="EMBL" id="BC120503">
    <property type="protein sequence ID" value="AAI20504.1"/>
    <property type="molecule type" value="mRNA"/>
</dbReference>
<dbReference type="EMBL" id="BC120505">
    <property type="protein sequence ID" value="AAI20506.1"/>
    <property type="molecule type" value="mRNA"/>
</dbReference>
<dbReference type="EMBL" id="BC144721">
    <property type="protein sequence ID" value="AAI44722.1"/>
    <property type="molecule type" value="mRNA"/>
</dbReference>
<dbReference type="EMBL" id="BC144723">
    <property type="protein sequence ID" value="AAI44724.1"/>
    <property type="molecule type" value="mRNA"/>
</dbReference>
<dbReference type="CCDS" id="CCDS57351.1">
    <molecule id="Q0P557-1"/>
</dbReference>
<dbReference type="RefSeq" id="NP_848474.2">
    <molecule id="Q0P557-1"/>
    <property type="nucleotide sequence ID" value="NM_178387.3"/>
</dbReference>
<dbReference type="RefSeq" id="XP_006504218.1">
    <molecule id="Q0P557-3"/>
    <property type="nucleotide sequence ID" value="XM_006504155.3"/>
</dbReference>
<dbReference type="RefSeq" id="XP_006504223.1">
    <molecule id="Q0P557-2"/>
    <property type="nucleotide sequence ID" value="XM_006504160.3"/>
</dbReference>
<dbReference type="SMR" id="Q0P557"/>
<dbReference type="FunCoup" id="Q0P557">
    <property type="interactions" value="486"/>
</dbReference>
<dbReference type="STRING" id="10090.ENSMUSP00000064308"/>
<dbReference type="iPTMnet" id="Q0P557"/>
<dbReference type="PhosphoSitePlus" id="Q0P557"/>
<dbReference type="SwissPalm" id="Q0P557"/>
<dbReference type="PaxDb" id="10090-ENSMUSP00000137444"/>
<dbReference type="ProteomicsDB" id="290239">
    <molecule id="Q0P557-1"/>
</dbReference>
<dbReference type="ProteomicsDB" id="290240">
    <molecule id="Q0P557-2"/>
</dbReference>
<dbReference type="ProteomicsDB" id="290241">
    <molecule id="Q0P557-3"/>
</dbReference>
<dbReference type="Antibodypedia" id="49630">
    <property type="antibodies" value="112 antibodies from 24 providers"/>
</dbReference>
<dbReference type="Ensembl" id="ENSMUST00000071077.14">
    <molecule id="Q0P557-1"/>
    <property type="protein sequence ID" value="ENSMUSP00000064308.8"/>
    <property type="gene ID" value="ENSMUSG00000029155.18"/>
</dbReference>
<dbReference type="GeneID" id="73472"/>
<dbReference type="KEGG" id="mmu:73472"/>
<dbReference type="UCSC" id="uc008xte.2">
    <molecule id="Q0P557-1"/>
    <property type="organism name" value="mouse"/>
</dbReference>
<dbReference type="AGR" id="MGI:1920722"/>
<dbReference type="CTD" id="132671"/>
<dbReference type="MGI" id="MGI:1920722">
    <property type="gene designation" value="Spata18"/>
</dbReference>
<dbReference type="VEuPathDB" id="HostDB:ENSMUSG00000029155"/>
<dbReference type="eggNOG" id="ENOG502QQMJ">
    <property type="taxonomic scope" value="Eukaryota"/>
</dbReference>
<dbReference type="GeneTree" id="ENSGT00390000013532"/>
<dbReference type="InParanoid" id="Q0P557"/>
<dbReference type="OMA" id="DQNLNIC"/>
<dbReference type="OrthoDB" id="5966837at2759"/>
<dbReference type="BioGRID-ORCS" id="73472">
    <property type="hits" value="1 hit in 77 CRISPR screens"/>
</dbReference>
<dbReference type="PRO" id="PR:Q0P557"/>
<dbReference type="Proteomes" id="UP000000589">
    <property type="component" value="Chromosome 5"/>
</dbReference>
<dbReference type="RNAct" id="Q0P557">
    <property type="molecule type" value="protein"/>
</dbReference>
<dbReference type="Bgee" id="ENSMUSG00000029155">
    <property type="expression patterns" value="Expressed in seminiferous tubule of testis and 23 other cell types or tissues"/>
</dbReference>
<dbReference type="ExpressionAtlas" id="Q0P557">
    <property type="expression patterns" value="baseline and differential"/>
</dbReference>
<dbReference type="GO" id="GO:0005737">
    <property type="term" value="C:cytoplasm"/>
    <property type="evidence" value="ECO:0000250"/>
    <property type="project" value="UniProtKB"/>
</dbReference>
<dbReference type="GO" id="GO:0005829">
    <property type="term" value="C:cytosol"/>
    <property type="evidence" value="ECO:0007669"/>
    <property type="project" value="UniProtKB-SubCell"/>
</dbReference>
<dbReference type="GO" id="GO:0043231">
    <property type="term" value="C:intracellular membrane-bounded organelle"/>
    <property type="evidence" value="ECO:0000250"/>
    <property type="project" value="UniProtKB"/>
</dbReference>
<dbReference type="GO" id="GO:0043232">
    <property type="term" value="C:intracellular membraneless organelle"/>
    <property type="evidence" value="ECO:0007669"/>
    <property type="project" value="Ensembl"/>
</dbReference>
<dbReference type="GO" id="GO:0005759">
    <property type="term" value="C:mitochondrial matrix"/>
    <property type="evidence" value="ECO:0000250"/>
    <property type="project" value="UniProtKB"/>
</dbReference>
<dbReference type="GO" id="GO:0005741">
    <property type="term" value="C:mitochondrial outer membrane"/>
    <property type="evidence" value="ECO:0007669"/>
    <property type="project" value="UniProtKB-SubCell"/>
</dbReference>
<dbReference type="GO" id="GO:0005739">
    <property type="term" value="C:mitochondrion"/>
    <property type="evidence" value="ECO:0000250"/>
    <property type="project" value="UniProtKB"/>
</dbReference>
<dbReference type="GO" id="GO:0005654">
    <property type="term" value="C:nucleoplasm"/>
    <property type="evidence" value="ECO:0007669"/>
    <property type="project" value="Ensembl"/>
</dbReference>
<dbReference type="GO" id="GO:1901612">
    <property type="term" value="F:cardiolipin binding"/>
    <property type="evidence" value="ECO:0000250"/>
    <property type="project" value="UniProtKB"/>
</dbReference>
<dbReference type="GO" id="GO:0042802">
    <property type="term" value="F:identical protein binding"/>
    <property type="evidence" value="ECO:0007669"/>
    <property type="project" value="Ensembl"/>
</dbReference>
<dbReference type="GO" id="GO:0140693">
    <property type="term" value="F:molecular condensate scaffold activity"/>
    <property type="evidence" value="ECO:0007669"/>
    <property type="project" value="Ensembl"/>
</dbReference>
<dbReference type="GO" id="GO:0035694">
    <property type="term" value="P:mitochondrial protein catabolic process"/>
    <property type="evidence" value="ECO:0000250"/>
    <property type="project" value="UniProtKB"/>
</dbReference>
<dbReference type="GO" id="GO:0035695">
    <property type="term" value="P:mitophagy by internal vacuole formation"/>
    <property type="evidence" value="ECO:0007669"/>
    <property type="project" value="Ensembl"/>
</dbReference>
<dbReference type="GO" id="GO:1900210">
    <property type="term" value="P:positive regulation of cardiolipin metabolic process"/>
    <property type="evidence" value="ECO:0007669"/>
    <property type="project" value="Ensembl"/>
</dbReference>
<dbReference type="InterPro" id="IPR026169">
    <property type="entry name" value="MIEAP"/>
</dbReference>
<dbReference type="InterPro" id="IPR031981">
    <property type="entry name" value="MIEAP_C"/>
</dbReference>
<dbReference type="PANTHER" id="PTHR21771:SF0">
    <property type="entry name" value="MITOCHONDRIA-EATING PROTEIN"/>
    <property type="match status" value="1"/>
</dbReference>
<dbReference type="PANTHER" id="PTHR21771">
    <property type="entry name" value="MITOCHONDRIA-EATING PROTEIN-RELATED"/>
    <property type="match status" value="1"/>
</dbReference>
<dbReference type="Pfam" id="PF16026">
    <property type="entry name" value="MIEAP"/>
    <property type="match status" value="1"/>
</dbReference>